<evidence type="ECO:0000255" key="1">
    <source>
        <dbReference type="HAMAP-Rule" id="MF_03141"/>
    </source>
</evidence>
<organism>
    <name type="scientific">Candida glabrata (strain ATCC 2001 / BCRC 20586 / JCM 3761 / NBRC 0622 / NRRL Y-65 / CBS 138)</name>
    <name type="common">Yeast</name>
    <name type="synonym">Nakaseomyces glabratus</name>
    <dbReference type="NCBI Taxonomy" id="284593"/>
    <lineage>
        <taxon>Eukaryota</taxon>
        <taxon>Fungi</taxon>
        <taxon>Dikarya</taxon>
        <taxon>Ascomycota</taxon>
        <taxon>Saccharomycotina</taxon>
        <taxon>Saccharomycetes</taxon>
        <taxon>Saccharomycetales</taxon>
        <taxon>Saccharomycetaceae</taxon>
        <taxon>Nakaseomyces</taxon>
    </lineage>
</organism>
<accession>Q6FWT9</accession>
<gene>
    <name evidence="1" type="primary">PAC1</name>
    <name evidence="1" type="synonym">LIS1</name>
    <name type="ordered locus">CAGL0C02937g</name>
</gene>
<dbReference type="EMBL" id="CR380949">
    <property type="protein sequence ID" value="CAG58211.1"/>
    <property type="molecule type" value="Genomic_DNA"/>
</dbReference>
<dbReference type="RefSeq" id="XP_445305.1">
    <property type="nucleotide sequence ID" value="XM_445305.1"/>
</dbReference>
<dbReference type="SMR" id="Q6FWT9"/>
<dbReference type="FunCoup" id="Q6FWT9">
    <property type="interactions" value="87"/>
</dbReference>
<dbReference type="STRING" id="284593.Q6FWT9"/>
<dbReference type="EnsemblFungi" id="CAGL0C02937g-T">
    <property type="protein sequence ID" value="CAGL0C02937g-T-p1"/>
    <property type="gene ID" value="CAGL0C02937g"/>
</dbReference>
<dbReference type="KEGG" id="cgr:2886739"/>
<dbReference type="CGD" id="CAL0127484">
    <property type="gene designation" value="CAGL0C02937g"/>
</dbReference>
<dbReference type="VEuPathDB" id="FungiDB:CAGL0C02937g"/>
<dbReference type="eggNOG" id="KOG0295">
    <property type="taxonomic scope" value="Eukaryota"/>
</dbReference>
<dbReference type="HOGENOM" id="CLU_000288_57_15_1"/>
<dbReference type="InParanoid" id="Q6FWT9"/>
<dbReference type="OMA" id="RGTCLMT"/>
<dbReference type="Proteomes" id="UP000002428">
    <property type="component" value="Chromosome C"/>
</dbReference>
<dbReference type="GO" id="GO:0005881">
    <property type="term" value="C:cytoplasmic microtubule"/>
    <property type="evidence" value="ECO:0007669"/>
    <property type="project" value="EnsemblFungi"/>
</dbReference>
<dbReference type="GO" id="GO:0005875">
    <property type="term" value="C:microtubule associated complex"/>
    <property type="evidence" value="ECO:0007669"/>
    <property type="project" value="UniProtKB-UniRule"/>
</dbReference>
<dbReference type="GO" id="GO:0005634">
    <property type="term" value="C:nucleus"/>
    <property type="evidence" value="ECO:0007669"/>
    <property type="project" value="EnsemblFungi"/>
</dbReference>
<dbReference type="GO" id="GO:0000922">
    <property type="term" value="C:spindle pole"/>
    <property type="evidence" value="ECO:0007669"/>
    <property type="project" value="UniProtKB-SubCell"/>
</dbReference>
<dbReference type="GO" id="GO:0070840">
    <property type="term" value="F:dynein complex binding"/>
    <property type="evidence" value="ECO:0007669"/>
    <property type="project" value="UniProtKB-UniRule"/>
</dbReference>
<dbReference type="GO" id="GO:0042802">
    <property type="term" value="F:identical protein binding"/>
    <property type="evidence" value="ECO:0007669"/>
    <property type="project" value="EnsemblFungi"/>
</dbReference>
<dbReference type="GO" id="GO:0051010">
    <property type="term" value="F:microtubule plus-end binding"/>
    <property type="evidence" value="ECO:0007669"/>
    <property type="project" value="EnsemblFungi"/>
</dbReference>
<dbReference type="GO" id="GO:0051301">
    <property type="term" value="P:cell division"/>
    <property type="evidence" value="ECO:0007669"/>
    <property type="project" value="UniProtKB-KW"/>
</dbReference>
<dbReference type="GO" id="GO:0000132">
    <property type="term" value="P:establishment of mitotic spindle orientation"/>
    <property type="evidence" value="ECO:0007669"/>
    <property type="project" value="UniProtKB-UniRule"/>
</dbReference>
<dbReference type="GO" id="GO:0051012">
    <property type="term" value="P:microtubule sliding"/>
    <property type="evidence" value="ECO:0007669"/>
    <property type="project" value="UniProtKB-UniRule"/>
</dbReference>
<dbReference type="GO" id="GO:0030473">
    <property type="term" value="P:nuclear migration along microtubule"/>
    <property type="evidence" value="ECO:0007669"/>
    <property type="project" value="EnsemblFungi"/>
</dbReference>
<dbReference type="Gene3D" id="1.20.960.30">
    <property type="match status" value="1"/>
</dbReference>
<dbReference type="Gene3D" id="2.130.10.10">
    <property type="entry name" value="YVTN repeat-like/Quinoprotein amine dehydrogenase"/>
    <property type="match status" value="2"/>
</dbReference>
<dbReference type="HAMAP" id="MF_03141">
    <property type="entry name" value="lis1"/>
    <property type="match status" value="1"/>
</dbReference>
<dbReference type="InterPro" id="IPR017252">
    <property type="entry name" value="Dynein_regulator_LIS1"/>
</dbReference>
<dbReference type="InterPro" id="IPR020472">
    <property type="entry name" value="G-protein_beta_WD-40_rep"/>
</dbReference>
<dbReference type="InterPro" id="IPR037190">
    <property type="entry name" value="LIS1_N"/>
</dbReference>
<dbReference type="InterPro" id="IPR015943">
    <property type="entry name" value="WD40/YVTN_repeat-like_dom_sf"/>
</dbReference>
<dbReference type="InterPro" id="IPR036322">
    <property type="entry name" value="WD40_repeat_dom_sf"/>
</dbReference>
<dbReference type="InterPro" id="IPR001680">
    <property type="entry name" value="WD40_rpt"/>
</dbReference>
<dbReference type="PANTHER" id="PTHR19848:SF8">
    <property type="entry name" value="F-BOX AND WD REPEAT DOMAIN CONTAINING 7"/>
    <property type="match status" value="1"/>
</dbReference>
<dbReference type="PANTHER" id="PTHR19848">
    <property type="entry name" value="WD40 REPEAT PROTEIN"/>
    <property type="match status" value="1"/>
</dbReference>
<dbReference type="Pfam" id="PF00400">
    <property type="entry name" value="WD40"/>
    <property type="match status" value="3"/>
</dbReference>
<dbReference type="PIRSF" id="PIRSF037647">
    <property type="entry name" value="Dynein_regulator_Lis1"/>
    <property type="match status" value="1"/>
</dbReference>
<dbReference type="PRINTS" id="PR00320">
    <property type="entry name" value="GPROTEINBRPT"/>
</dbReference>
<dbReference type="SMART" id="SM00320">
    <property type="entry name" value="WD40"/>
    <property type="match status" value="7"/>
</dbReference>
<dbReference type="SUPFAM" id="SSF109925">
    <property type="entry name" value="Lissencephaly-1 protein (Lis-1, PAF-AH alpha) N-terminal domain"/>
    <property type="match status" value="1"/>
</dbReference>
<dbReference type="SUPFAM" id="SSF50978">
    <property type="entry name" value="WD40 repeat-like"/>
    <property type="match status" value="1"/>
</dbReference>
<dbReference type="PROSITE" id="PS00678">
    <property type="entry name" value="WD_REPEATS_1"/>
    <property type="match status" value="1"/>
</dbReference>
<dbReference type="PROSITE" id="PS50082">
    <property type="entry name" value="WD_REPEATS_2"/>
    <property type="match status" value="2"/>
</dbReference>
<dbReference type="PROSITE" id="PS50294">
    <property type="entry name" value="WD_REPEATS_REGION"/>
    <property type="match status" value="1"/>
</dbReference>
<feature type="chain" id="PRO_0000405074" description="Nuclear distribution protein PAC1">
    <location>
        <begin position="1"/>
        <end position="467"/>
    </location>
</feature>
<feature type="repeat" description="WD 1">
    <location>
        <begin position="121"/>
        <end position="160"/>
    </location>
</feature>
<feature type="repeat" description="WD 2">
    <location>
        <begin position="164"/>
        <end position="212"/>
    </location>
</feature>
<feature type="repeat" description="WD 3">
    <location>
        <begin position="219"/>
        <end position="262"/>
    </location>
</feature>
<feature type="repeat" description="WD 4">
    <location>
        <begin position="264"/>
        <end position="302"/>
    </location>
</feature>
<feature type="repeat" description="WD 5">
    <location>
        <begin position="325"/>
        <end position="365"/>
    </location>
</feature>
<feature type="repeat" description="WD 6">
    <location>
        <begin position="385"/>
        <end position="424"/>
    </location>
</feature>
<feature type="repeat" description="WD 7">
    <location>
        <begin position="426"/>
        <end position="466"/>
    </location>
</feature>
<feature type="coiled-coil region" evidence="1">
    <location>
        <begin position="62"/>
        <end position="96"/>
    </location>
</feature>
<proteinExistence type="inferred from homology"/>
<protein>
    <recommendedName>
        <fullName evidence="1">Nuclear distribution protein PAC1</fullName>
    </recommendedName>
    <alternativeName>
        <fullName evidence="1">Lissencephaly-1 homolog</fullName>
        <shortName evidence="1">LIS-1</shortName>
    </alternativeName>
    <alternativeName>
        <fullName evidence="1">nudF homolog</fullName>
    </alternativeName>
</protein>
<keyword id="KW-0131">Cell cycle</keyword>
<keyword id="KW-0132">Cell division</keyword>
<keyword id="KW-0175">Coiled coil</keyword>
<keyword id="KW-0963">Cytoplasm</keyword>
<keyword id="KW-0206">Cytoskeleton</keyword>
<keyword id="KW-0493">Microtubule</keyword>
<keyword id="KW-0498">Mitosis</keyword>
<keyword id="KW-1185">Reference proteome</keyword>
<keyword id="KW-0677">Repeat</keyword>
<keyword id="KW-0813">Transport</keyword>
<keyword id="KW-0853">WD repeat</keyword>
<reference key="1">
    <citation type="journal article" date="2004" name="Nature">
        <title>Genome evolution in yeasts.</title>
        <authorList>
            <person name="Dujon B."/>
            <person name="Sherman D."/>
            <person name="Fischer G."/>
            <person name="Durrens P."/>
            <person name="Casaregola S."/>
            <person name="Lafontaine I."/>
            <person name="de Montigny J."/>
            <person name="Marck C."/>
            <person name="Neuveglise C."/>
            <person name="Talla E."/>
            <person name="Goffard N."/>
            <person name="Frangeul L."/>
            <person name="Aigle M."/>
            <person name="Anthouard V."/>
            <person name="Babour A."/>
            <person name="Barbe V."/>
            <person name="Barnay S."/>
            <person name="Blanchin S."/>
            <person name="Beckerich J.-M."/>
            <person name="Beyne E."/>
            <person name="Bleykasten C."/>
            <person name="Boisrame A."/>
            <person name="Boyer J."/>
            <person name="Cattolico L."/>
            <person name="Confanioleri F."/>
            <person name="de Daruvar A."/>
            <person name="Despons L."/>
            <person name="Fabre E."/>
            <person name="Fairhead C."/>
            <person name="Ferry-Dumazet H."/>
            <person name="Groppi A."/>
            <person name="Hantraye F."/>
            <person name="Hennequin C."/>
            <person name="Jauniaux N."/>
            <person name="Joyet P."/>
            <person name="Kachouri R."/>
            <person name="Kerrest A."/>
            <person name="Koszul R."/>
            <person name="Lemaire M."/>
            <person name="Lesur I."/>
            <person name="Ma L."/>
            <person name="Muller H."/>
            <person name="Nicaud J.-M."/>
            <person name="Nikolski M."/>
            <person name="Oztas S."/>
            <person name="Ozier-Kalogeropoulos O."/>
            <person name="Pellenz S."/>
            <person name="Potier S."/>
            <person name="Richard G.-F."/>
            <person name="Straub M.-L."/>
            <person name="Suleau A."/>
            <person name="Swennen D."/>
            <person name="Tekaia F."/>
            <person name="Wesolowski-Louvel M."/>
            <person name="Westhof E."/>
            <person name="Wirth B."/>
            <person name="Zeniou-Meyer M."/>
            <person name="Zivanovic Y."/>
            <person name="Bolotin-Fukuhara M."/>
            <person name="Thierry A."/>
            <person name="Bouchier C."/>
            <person name="Caudron B."/>
            <person name="Scarpelli C."/>
            <person name="Gaillardin C."/>
            <person name="Weissenbach J."/>
            <person name="Wincker P."/>
            <person name="Souciet J.-L."/>
        </authorList>
    </citation>
    <scope>NUCLEOTIDE SEQUENCE [LARGE SCALE GENOMIC DNA]</scope>
    <source>
        <strain>ATCC 2001 / BCRC 20586 / JCM 3761 / NBRC 0622 / NRRL Y-65 / CBS 138</strain>
    </source>
</reference>
<name>LIS1_CANGA</name>
<sequence length="467" mass="52501">MSSLTDSQVNDLHCSIYRYVQWVSQNNGSSDLLNKLQSVLDIDELQLSLDDGDQMLLPKKWGSIIRLQRAITKLEQKCDALQQELDDKTKQLETIVPKDTQIATTTDVNWLPPDHIYASIQNESPVTAIKLHPSLAIVYVGTDTGRLIAYDILNYTIPLAVTTAHSKAITSIEVIEAHNFEEFIDSTTLVSTTSKDAQINVYDHSSNTGELKLIRSFNAHDSTVSSQKTWQKDNDVLLASSSRDATVKVWRVNDSRCLQSFSPHSEWVKSIDVLDEYILSGSLDSTLRLTHWPSGNGLSVGTGHEFPIERVLIIPFSDSKICTSPYRDQNEHSAFAPLRFKYCASAARDNTIKIWEVPLPQLKPNSAPVPSTTNTTFKCVMTLRGHTSWVKDLKLRGDHLFSCSDDETIKCWDLNTGNCVKTWSSIHNNFINCIDIDREATIEQFSPSLQREILVSGDMDNKVKIIR</sequence>
<comment type="function">
    <text evidence="1">Positively regulates the activity of the minus-end directed microtubule motor protein dynein. Plays a central role in positioning the mitotic spindle at the bud neck during cell division. Targets cytoplasmic dynein to microtubule plus ends, thereby promoting dynein-mediated microtubule sliding along the bud cortex and consequently the movement of the mitotic spindle to the bud neck.</text>
</comment>
<comment type="subunit">
    <text evidence="1">Self-associates. Interacts with NDL1 and dynein.</text>
</comment>
<comment type="subcellular location">
    <subcellularLocation>
        <location evidence="1">Cytoplasm</location>
        <location evidence="1">Cytoskeleton</location>
    </subcellularLocation>
    <subcellularLocation>
        <location evidence="1">Cytoplasm</location>
        <location evidence="1">Cytoskeleton</location>
        <location evidence="1">Spindle pole</location>
    </subcellularLocation>
    <text evidence="1">Localizes to the plus ends of microtubules and the mitotic spindle poles.</text>
</comment>
<comment type="similarity">
    <text evidence="1">Belongs to the WD repeat LIS1/nudF family.</text>
</comment>